<gene>
    <name evidence="1" type="primary">truB</name>
    <name type="ordered locus">Pro_1428</name>
</gene>
<name>TRUB_PROMA</name>
<reference key="1">
    <citation type="journal article" date="2003" name="Proc. Natl. Acad. Sci. U.S.A.">
        <title>Genome sequence of the cyanobacterium Prochlorococcus marinus SS120, a nearly minimal oxyphototrophic genome.</title>
        <authorList>
            <person name="Dufresne A."/>
            <person name="Salanoubat M."/>
            <person name="Partensky F."/>
            <person name="Artiguenave F."/>
            <person name="Axmann I.M."/>
            <person name="Barbe V."/>
            <person name="Duprat S."/>
            <person name="Galperin M.Y."/>
            <person name="Koonin E.V."/>
            <person name="Le Gall F."/>
            <person name="Makarova K.S."/>
            <person name="Ostrowski M."/>
            <person name="Oztas S."/>
            <person name="Robert C."/>
            <person name="Rogozin I.B."/>
            <person name="Scanlan D.J."/>
            <person name="Tandeau de Marsac N."/>
            <person name="Weissenbach J."/>
            <person name="Wincker P."/>
            <person name="Wolf Y.I."/>
            <person name="Hess W.R."/>
        </authorList>
    </citation>
    <scope>NUCLEOTIDE SEQUENCE [LARGE SCALE GENOMIC DNA]</scope>
    <source>
        <strain>SARG / CCMP1375 / SS120</strain>
    </source>
</reference>
<evidence type="ECO:0000255" key="1">
    <source>
        <dbReference type="HAMAP-Rule" id="MF_01080"/>
    </source>
</evidence>
<sequence length="313" mass="35025">MNSIALGFLVINKPAGLTSHDCVNRLRRIYGIKRIGHGGTLDPAVTGVLPIAIGKATRLLSFLPSPKTYEGTIKLGISTNTDDLTGETISEHSWDQVKENSILNCLNKFQGEIKQCPPIFSSVHINGERAYKKARRGEFFELPPKLIKIYRIKLINWNKKDGTIDLEVHCSPGTYIRSLARDIGKKLGCGGALAKLNRTMALGFNIDQAIELPDLDKNNDLNKPMIIDPLKALSHLPSIKLMTIDELSSWRKGKHLILSKSRLKNPLYLIEDDKDIPKTFLTVINNENHLIGLARWHHEPFKIEPKIVFNADG</sequence>
<accession>P59880</accession>
<keyword id="KW-0413">Isomerase</keyword>
<keyword id="KW-1185">Reference proteome</keyword>
<keyword id="KW-0819">tRNA processing</keyword>
<dbReference type="EC" id="5.4.99.25" evidence="1"/>
<dbReference type="EMBL" id="AE017126">
    <property type="protein sequence ID" value="AAQ00472.1"/>
    <property type="molecule type" value="Genomic_DNA"/>
</dbReference>
<dbReference type="RefSeq" id="NP_875819.1">
    <property type="nucleotide sequence ID" value="NC_005042.1"/>
</dbReference>
<dbReference type="RefSeq" id="WP_011125579.1">
    <property type="nucleotide sequence ID" value="NC_005042.1"/>
</dbReference>
<dbReference type="SMR" id="P59880"/>
<dbReference type="STRING" id="167539.Pro_1428"/>
<dbReference type="EnsemblBacteria" id="AAQ00472">
    <property type="protein sequence ID" value="AAQ00472"/>
    <property type="gene ID" value="Pro_1428"/>
</dbReference>
<dbReference type="KEGG" id="pma:Pro_1428"/>
<dbReference type="PATRIC" id="fig|167539.5.peg.1494"/>
<dbReference type="eggNOG" id="COG0130">
    <property type="taxonomic scope" value="Bacteria"/>
</dbReference>
<dbReference type="HOGENOM" id="CLU_032087_0_0_3"/>
<dbReference type="OrthoDB" id="9802309at2"/>
<dbReference type="Proteomes" id="UP000001420">
    <property type="component" value="Chromosome"/>
</dbReference>
<dbReference type="GO" id="GO:0003723">
    <property type="term" value="F:RNA binding"/>
    <property type="evidence" value="ECO:0007669"/>
    <property type="project" value="InterPro"/>
</dbReference>
<dbReference type="GO" id="GO:0160148">
    <property type="term" value="F:tRNA pseudouridine(55) synthase activity"/>
    <property type="evidence" value="ECO:0007669"/>
    <property type="project" value="UniProtKB-EC"/>
</dbReference>
<dbReference type="GO" id="GO:1990481">
    <property type="term" value="P:mRNA pseudouridine synthesis"/>
    <property type="evidence" value="ECO:0007669"/>
    <property type="project" value="TreeGrafter"/>
</dbReference>
<dbReference type="GO" id="GO:0031119">
    <property type="term" value="P:tRNA pseudouridine synthesis"/>
    <property type="evidence" value="ECO:0007669"/>
    <property type="project" value="UniProtKB-UniRule"/>
</dbReference>
<dbReference type="CDD" id="cd02573">
    <property type="entry name" value="PseudoU_synth_EcTruB"/>
    <property type="match status" value="1"/>
</dbReference>
<dbReference type="Gene3D" id="3.30.2350.10">
    <property type="entry name" value="Pseudouridine synthase"/>
    <property type="match status" value="1"/>
</dbReference>
<dbReference type="HAMAP" id="MF_01080">
    <property type="entry name" value="TruB_bact"/>
    <property type="match status" value="1"/>
</dbReference>
<dbReference type="InterPro" id="IPR020103">
    <property type="entry name" value="PsdUridine_synth_cat_dom_sf"/>
</dbReference>
<dbReference type="InterPro" id="IPR002501">
    <property type="entry name" value="PsdUridine_synth_N"/>
</dbReference>
<dbReference type="InterPro" id="IPR014780">
    <property type="entry name" value="tRNA_psdUridine_synth_TruB"/>
</dbReference>
<dbReference type="InterPro" id="IPR032819">
    <property type="entry name" value="TruB_C"/>
</dbReference>
<dbReference type="NCBIfam" id="TIGR00431">
    <property type="entry name" value="TruB"/>
    <property type="match status" value="1"/>
</dbReference>
<dbReference type="PANTHER" id="PTHR13767:SF2">
    <property type="entry name" value="PSEUDOURIDYLATE SYNTHASE TRUB1"/>
    <property type="match status" value="1"/>
</dbReference>
<dbReference type="PANTHER" id="PTHR13767">
    <property type="entry name" value="TRNA-PSEUDOURIDINE SYNTHASE"/>
    <property type="match status" value="1"/>
</dbReference>
<dbReference type="Pfam" id="PF16198">
    <property type="entry name" value="TruB_C_2"/>
    <property type="match status" value="1"/>
</dbReference>
<dbReference type="Pfam" id="PF01509">
    <property type="entry name" value="TruB_N"/>
    <property type="match status" value="1"/>
</dbReference>
<dbReference type="SUPFAM" id="SSF55120">
    <property type="entry name" value="Pseudouridine synthase"/>
    <property type="match status" value="1"/>
</dbReference>
<comment type="function">
    <text evidence="1">Responsible for synthesis of pseudouridine from uracil-55 in the psi GC loop of transfer RNAs.</text>
</comment>
<comment type="catalytic activity">
    <reaction evidence="1">
        <text>uridine(55) in tRNA = pseudouridine(55) in tRNA</text>
        <dbReference type="Rhea" id="RHEA:42532"/>
        <dbReference type="Rhea" id="RHEA-COMP:10101"/>
        <dbReference type="Rhea" id="RHEA-COMP:10102"/>
        <dbReference type="ChEBI" id="CHEBI:65314"/>
        <dbReference type="ChEBI" id="CHEBI:65315"/>
        <dbReference type="EC" id="5.4.99.25"/>
    </reaction>
</comment>
<comment type="similarity">
    <text evidence="1">Belongs to the pseudouridine synthase TruB family. Type 1 subfamily.</text>
</comment>
<proteinExistence type="inferred from homology"/>
<feature type="chain" id="PRO_0000121885" description="tRNA pseudouridine synthase B">
    <location>
        <begin position="1"/>
        <end position="313"/>
    </location>
</feature>
<feature type="active site" description="Nucleophile" evidence="1">
    <location>
        <position position="42"/>
    </location>
</feature>
<organism>
    <name type="scientific">Prochlorococcus marinus (strain SARG / CCMP1375 / SS120)</name>
    <dbReference type="NCBI Taxonomy" id="167539"/>
    <lineage>
        <taxon>Bacteria</taxon>
        <taxon>Bacillati</taxon>
        <taxon>Cyanobacteriota</taxon>
        <taxon>Cyanophyceae</taxon>
        <taxon>Synechococcales</taxon>
        <taxon>Prochlorococcaceae</taxon>
        <taxon>Prochlorococcus</taxon>
    </lineage>
</organism>
<protein>
    <recommendedName>
        <fullName evidence="1">tRNA pseudouridine synthase B</fullName>
        <ecNumber evidence="1">5.4.99.25</ecNumber>
    </recommendedName>
    <alternativeName>
        <fullName evidence="1">tRNA pseudouridine(55) synthase</fullName>
        <shortName evidence="1">Psi55 synthase</shortName>
    </alternativeName>
    <alternativeName>
        <fullName evidence="1">tRNA pseudouridylate synthase</fullName>
    </alternativeName>
    <alternativeName>
        <fullName evidence="1">tRNA-uridine isomerase</fullName>
    </alternativeName>
</protein>